<sequence>MLLHNKTLAGKALAFIAEEGYVPSMREKFLGWNVPPEYSDLVHPHWRAFPAPGKHFHIGLAIIYSMLLIMSLVGNCCVIWIFSTSKSLRTPSNMFIVSLAIFDIIMAFEMPMLVISSFMERMIGWEIGCDVYSVFGSISGMGQAMTNAAIAFDRYRTISCPIDGRLNSKQAAVIIAFTWFWVTPFTVLPLLKVWGRYTTEGFLTTCSFDFLTDDEDTKVFVTCIFIWAYVIPLIFIILFYSRLLSSIRNHEKMLREQAKKMNVKSLVSNQDKERSAEVRIAKVAFTIFFLFLLAWTPYATVALIGVYGNRELLTPVSTMLPAVFAKTVSCIDPWIYAINHPRYRQELQKRCKWMGIHEPETTSDATSAQTEKIKTDE</sequence>
<feature type="chain" id="PRO_0000197638" description="Opsin, blue-sensitive">
    <location>
        <begin position="1"/>
        <end position="377"/>
    </location>
</feature>
<feature type="topological domain" description="Extracellular">
    <location>
        <begin position="1"/>
        <end position="56"/>
    </location>
</feature>
<feature type="transmembrane region" description="Helical; Name=1" evidence="2">
    <location>
        <begin position="57"/>
        <end position="81"/>
    </location>
</feature>
<feature type="topological domain" description="Cytoplasmic">
    <location>
        <begin position="82"/>
        <end position="93"/>
    </location>
</feature>
<feature type="transmembrane region" description="Helical; Name=2" evidence="2">
    <location>
        <begin position="94"/>
        <end position="119"/>
    </location>
</feature>
<feature type="topological domain" description="Extracellular">
    <location>
        <begin position="120"/>
        <end position="132"/>
    </location>
</feature>
<feature type="transmembrane region" description="Helical; Name=3" evidence="2">
    <location>
        <begin position="133"/>
        <end position="152"/>
    </location>
</feature>
<feature type="topological domain" description="Cytoplasmic">
    <location>
        <begin position="153"/>
        <end position="170"/>
    </location>
</feature>
<feature type="transmembrane region" description="Helical; Name=4" evidence="2">
    <location>
        <begin position="171"/>
        <end position="195"/>
    </location>
</feature>
<feature type="topological domain" description="Extracellular">
    <location>
        <begin position="196"/>
        <end position="219"/>
    </location>
</feature>
<feature type="transmembrane region" description="Helical; Name=5" evidence="2">
    <location>
        <begin position="220"/>
        <end position="247"/>
    </location>
</feature>
<feature type="topological domain" description="Cytoplasmic">
    <location>
        <begin position="248"/>
        <end position="282"/>
    </location>
</feature>
<feature type="transmembrane region" description="Helical; Name=6" evidence="2">
    <location>
        <begin position="283"/>
        <end position="306"/>
    </location>
</feature>
<feature type="topological domain" description="Extracellular">
    <location>
        <begin position="307"/>
        <end position="314"/>
    </location>
</feature>
<feature type="transmembrane region" description="Helical; Name=7" evidence="2">
    <location>
        <begin position="315"/>
        <end position="339"/>
    </location>
</feature>
<feature type="topological domain" description="Cytoplasmic">
    <location>
        <begin position="340"/>
        <end position="377"/>
    </location>
</feature>
<feature type="modified residue" description="N6-(retinylidene)lysine" evidence="1">
    <location>
        <position position="326"/>
    </location>
</feature>
<feature type="glycosylation site" description="N-linked (GlcNAc...) asparagine" evidence="2">
    <location>
        <position position="5"/>
    </location>
</feature>
<feature type="disulfide bond" evidence="3">
    <location>
        <begin position="129"/>
        <end position="206"/>
    </location>
</feature>
<feature type="sequence conflict" description="In Ref. 1; AAC47455." evidence="5" ref="1">
    <original>H</original>
    <variation>R</variation>
    <location>
        <position position="43"/>
    </location>
</feature>
<protein>
    <recommendedName>
        <fullName>Opsin, blue-sensitive</fullName>
    </recommendedName>
    <alternativeName>
        <fullName>Blue-sensitive opsin</fullName>
        <shortName>AmBLop</shortName>
    </alternativeName>
</protein>
<proteinExistence type="evidence at protein level"/>
<name>OPSB_APIME</name>
<gene>
    <name type="primary">BLOP</name>
</gene>
<organism>
    <name type="scientific">Apis mellifera</name>
    <name type="common">Honeybee</name>
    <dbReference type="NCBI Taxonomy" id="7460"/>
    <lineage>
        <taxon>Eukaryota</taxon>
        <taxon>Metazoa</taxon>
        <taxon>Ecdysozoa</taxon>
        <taxon>Arthropoda</taxon>
        <taxon>Hexapoda</taxon>
        <taxon>Insecta</taxon>
        <taxon>Pterygota</taxon>
        <taxon>Neoptera</taxon>
        <taxon>Endopterygota</taxon>
        <taxon>Hymenoptera</taxon>
        <taxon>Apocrita</taxon>
        <taxon>Aculeata</taxon>
        <taxon>Apoidea</taxon>
        <taxon>Anthophila</taxon>
        <taxon>Apidae</taxon>
        <taxon>Apis</taxon>
    </lineage>
</organism>
<keyword id="KW-0157">Chromophore</keyword>
<keyword id="KW-1015">Disulfide bond</keyword>
<keyword id="KW-0297">G-protein coupled receptor</keyword>
<keyword id="KW-0325">Glycoprotein</keyword>
<keyword id="KW-0472">Membrane</keyword>
<keyword id="KW-0597">Phosphoprotein</keyword>
<keyword id="KW-0600">Photoreceptor protein</keyword>
<keyword id="KW-0675">Receptor</keyword>
<keyword id="KW-1185">Reference proteome</keyword>
<keyword id="KW-0681">Retinal protein</keyword>
<keyword id="KW-0716">Sensory transduction</keyword>
<keyword id="KW-0807">Transducer</keyword>
<keyword id="KW-0812">Transmembrane</keyword>
<keyword id="KW-1133">Transmembrane helix</keyword>
<keyword id="KW-0844">Vision</keyword>
<comment type="function">
    <text>Visual pigments are the light-absorbing molecules that mediate vision. They consist of an apoprotein, opsin, covalently linked to 11-cis-retinal.</text>
</comment>
<comment type="biophysicochemical properties">
    <absorption>
        <max>439 nm</max>
    </absorption>
</comment>
<comment type="subcellular location">
    <subcellularLocation>
        <location>Membrane</location>
        <topology>Multi-pass membrane protein</topology>
    </subcellularLocation>
</comment>
<comment type="tissue specificity">
    <text evidence="4">Expressed in the dorsal region of the retina and sparsely expressed in the ventral region.</text>
</comment>
<comment type="PTM">
    <text evidence="1">Phosphorylated on some or all of the serine and threonine residues present in the C-terminal region.</text>
</comment>
<comment type="similarity">
    <text evidence="3">Belongs to the G-protein coupled receptor 1 family. Opsin subfamily.</text>
</comment>
<comment type="caution">
    <text evidence="6">Was originally thought to be the ultraviolet sensitive opsin.</text>
</comment>
<accession>P90680</accession>
<accession>O61302</accession>
<accession>Q2YD69</accession>
<evidence type="ECO:0000250" key="1"/>
<evidence type="ECO:0000255" key="2"/>
<evidence type="ECO:0000255" key="3">
    <source>
        <dbReference type="PROSITE-ProRule" id="PRU00521"/>
    </source>
</evidence>
<evidence type="ECO:0000269" key="4">
    <source>
    </source>
</evidence>
<evidence type="ECO:0000305" key="5"/>
<evidence type="ECO:0000305" key="6">
    <source>
    </source>
</evidence>
<dbReference type="EMBL" id="U70841">
    <property type="protein sequence ID" value="AAC47455.1"/>
    <property type="molecule type" value="mRNA"/>
</dbReference>
<dbReference type="EMBL" id="AF004168">
    <property type="protein sequence ID" value="AAC13417.1"/>
    <property type="molecule type" value="mRNA"/>
</dbReference>
<dbReference type="EMBL" id="AADG06002981">
    <property type="status" value="NOT_ANNOTATED_CDS"/>
    <property type="molecule type" value="Genomic_DNA"/>
</dbReference>
<dbReference type="EMBL" id="BK005512">
    <property type="protein sequence ID" value="DAA05737.1"/>
    <property type="molecule type" value="Genomic_DNA"/>
</dbReference>
<dbReference type="RefSeq" id="NP_001011606.1">
    <property type="nucleotide sequence ID" value="NM_001011606.1"/>
</dbReference>
<dbReference type="SMR" id="P90680"/>
<dbReference type="FunCoup" id="P90680">
    <property type="interactions" value="10"/>
</dbReference>
<dbReference type="STRING" id="7460.P90680"/>
<dbReference type="GlyCosmos" id="P90680">
    <property type="glycosylation" value="1 site, No reported glycans"/>
</dbReference>
<dbReference type="PaxDb" id="7460-GB41643-PA"/>
<dbReference type="EnsemblMetazoa" id="NM_001011606">
    <property type="protein sequence ID" value="NP_001011606"/>
    <property type="gene ID" value="GeneID_406128"/>
</dbReference>
<dbReference type="GeneID" id="406128"/>
<dbReference type="KEGG" id="ame:406128"/>
<dbReference type="CTD" id="100121036"/>
<dbReference type="eggNOG" id="KOG3656">
    <property type="taxonomic scope" value="Eukaryota"/>
</dbReference>
<dbReference type="HOGENOM" id="CLU_009579_3_0_1"/>
<dbReference type="InParanoid" id="P90680"/>
<dbReference type="OMA" id="MLACKSV"/>
<dbReference type="OrthoDB" id="2105199at2759"/>
<dbReference type="PhylomeDB" id="P90680"/>
<dbReference type="Proteomes" id="UP000005203">
    <property type="component" value="Linkage group LG14"/>
</dbReference>
<dbReference type="GO" id="GO:0016020">
    <property type="term" value="C:membrane"/>
    <property type="evidence" value="ECO:0007669"/>
    <property type="project" value="UniProtKB-SubCell"/>
</dbReference>
<dbReference type="GO" id="GO:0004930">
    <property type="term" value="F:G protein-coupled receptor activity"/>
    <property type="evidence" value="ECO:0007669"/>
    <property type="project" value="UniProtKB-KW"/>
</dbReference>
<dbReference type="GO" id="GO:0009881">
    <property type="term" value="F:photoreceptor activity"/>
    <property type="evidence" value="ECO:0007669"/>
    <property type="project" value="UniProtKB-KW"/>
</dbReference>
<dbReference type="GO" id="GO:0050908">
    <property type="term" value="P:detection of light stimulus involved in visual perception"/>
    <property type="evidence" value="ECO:0000314"/>
    <property type="project" value="CACAO"/>
</dbReference>
<dbReference type="GO" id="GO:0007602">
    <property type="term" value="P:phototransduction"/>
    <property type="evidence" value="ECO:0007669"/>
    <property type="project" value="UniProtKB-KW"/>
</dbReference>
<dbReference type="CDD" id="cd15079">
    <property type="entry name" value="7tmA_photoreceptors_insect"/>
    <property type="match status" value="1"/>
</dbReference>
<dbReference type="FunFam" id="1.20.1070.10:FF:000044">
    <property type="entry name" value="Opsin, ultraviolet-sensitive"/>
    <property type="match status" value="1"/>
</dbReference>
<dbReference type="Gene3D" id="1.20.1070.10">
    <property type="entry name" value="Rhodopsin 7-helix transmembrane proteins"/>
    <property type="match status" value="1"/>
</dbReference>
<dbReference type="InterPro" id="IPR050125">
    <property type="entry name" value="GPCR_opsins"/>
</dbReference>
<dbReference type="InterPro" id="IPR000276">
    <property type="entry name" value="GPCR_Rhodpsn"/>
</dbReference>
<dbReference type="InterPro" id="IPR017452">
    <property type="entry name" value="GPCR_Rhodpsn_7TM"/>
</dbReference>
<dbReference type="InterPro" id="IPR001760">
    <property type="entry name" value="Opsin"/>
</dbReference>
<dbReference type="InterPro" id="IPR027430">
    <property type="entry name" value="Retinal_BS"/>
</dbReference>
<dbReference type="PANTHER" id="PTHR24240">
    <property type="entry name" value="OPSIN"/>
    <property type="match status" value="1"/>
</dbReference>
<dbReference type="Pfam" id="PF00001">
    <property type="entry name" value="7tm_1"/>
    <property type="match status" value="1"/>
</dbReference>
<dbReference type="PRINTS" id="PR00237">
    <property type="entry name" value="GPCRRHODOPSN"/>
</dbReference>
<dbReference type="PRINTS" id="PR00238">
    <property type="entry name" value="OPSIN"/>
</dbReference>
<dbReference type="PRINTS" id="PR00577">
    <property type="entry name" value="OPSINRH3RH4"/>
</dbReference>
<dbReference type="SMART" id="SM01381">
    <property type="entry name" value="7TM_GPCR_Srsx"/>
    <property type="match status" value="1"/>
</dbReference>
<dbReference type="SUPFAM" id="SSF81321">
    <property type="entry name" value="Family A G protein-coupled receptor-like"/>
    <property type="match status" value="1"/>
</dbReference>
<dbReference type="PROSITE" id="PS50262">
    <property type="entry name" value="G_PROTEIN_RECEP_F1_2"/>
    <property type="match status" value="1"/>
</dbReference>
<dbReference type="PROSITE" id="PS00238">
    <property type="entry name" value="OPSIN"/>
    <property type="match status" value="1"/>
</dbReference>
<reference key="1">
    <citation type="journal article" date="1997" name="Eur. J. Biochem.">
        <title>Characterisation of the ultraviolet-sensitive opsin gene in the honey bee, Apis mellifera.</title>
        <authorList>
            <person name="Bellingham J."/>
            <person name="Wilkie S.E."/>
            <person name="Morris A.G."/>
            <person name="Bowmaker J.K."/>
            <person name="Hunt D.M."/>
        </authorList>
    </citation>
    <scope>NUCLEOTIDE SEQUENCE [MRNA]</scope>
    <source>
        <tissue>Head</tissue>
    </source>
</reference>
<reference key="2">
    <citation type="journal article" date="1998" name="J. Neurosci.">
        <title>Honeybee blue- and ultraviolet-sensitive opsins: cloning, heterologous expression in Drosophila, and physiological characterization.</title>
        <authorList>
            <person name="Townson S.M."/>
            <person name="Chang B.S.W."/>
            <person name="Salcedo E."/>
            <person name="Chadwell L.V."/>
            <person name="Pierce N.E."/>
            <person name="Britt S.G."/>
        </authorList>
    </citation>
    <scope>NUCLEOTIDE SEQUENCE [MRNA]</scope>
    <source>
        <tissue>Head</tissue>
    </source>
</reference>
<reference key="3">
    <citation type="submission" date="2010-11" db="EMBL/GenBank/DDBJ databases">
        <authorList>
            <consortium name="Honey bee genome project"/>
            <person name="Zhang L."/>
            <person name="Deng J."/>
            <person name="Wu Y.-Q."/>
            <person name="Kovar C."/>
            <person name="Aqrawi P."/>
            <person name="Bandaranaike D."/>
            <person name="Blankenburg K."/>
            <person name="Chen D."/>
            <person name="Denson S."/>
            <person name="Dinh H."/>
            <person name="Firestine M."/>
            <person name="Gross S."/>
            <person name="Han Y."/>
            <person name="Hernandez B."/>
            <person name="Holder M."/>
            <person name="Jackson L."/>
            <person name="Javaid M."/>
            <person name="Jing C."/>
            <person name="Jones J."/>
            <person name="Joshi V."/>
            <person name="Kamau G."/>
            <person name="Korchina V."/>
            <person name="Lee S."/>
            <person name="Lorensuhewa L."/>
            <person name="Mata R."/>
            <person name="Mathew T."/>
            <person name="Mims S."/>
            <person name="Ngo R."/>
            <person name="Nguyen L."/>
            <person name="Okwuonu G."/>
            <person name="Ongeri F."/>
            <person name="Osuji N."/>
            <person name="Pham C."/>
            <person name="Puazo M."/>
            <person name="Qu C."/>
            <person name="Quiroz J."/>
            <person name="Raj R."/>
            <person name="Rio Deiros D."/>
            <person name="Santibanez J."/>
            <person name="Scheel M."/>
            <person name="Scherer S."/>
            <person name="Vee V."/>
            <person name="Wang M."/>
            <person name="Xin Y."/>
            <person name="Richards S."/>
            <person name="Reid J.G."/>
            <person name="Newsham I."/>
            <person name="Worley K.C."/>
            <person name="Muzny D.M."/>
            <person name="Gibbs R."/>
        </authorList>
    </citation>
    <scope>NUCLEOTIDE SEQUENCE [LARGE SCALE GENOMIC DNA]</scope>
    <source>
        <strain>DH4</strain>
    </source>
</reference>
<reference key="4">
    <citation type="journal article" date="2005" name="Insect Biochem. Mol. Biol.">
        <title>Pteropsin: a vertebrate-like non-visual opsin expressed in the honey bee brain.</title>
        <authorList>
            <person name="Velarde R.A."/>
            <person name="Sauer C.D."/>
            <person name="Walden K.K.O."/>
            <person name="Fahrbach S.E."/>
            <person name="Robertson H.M."/>
        </authorList>
    </citation>
    <scope>IDENTIFICATION</scope>
    <scope>TISSUE SPECIFICITY</scope>
</reference>